<organism>
    <name type="scientific">Marinomonas sp. (strain MWYL1)</name>
    <dbReference type="NCBI Taxonomy" id="400668"/>
    <lineage>
        <taxon>Bacteria</taxon>
        <taxon>Pseudomonadati</taxon>
        <taxon>Pseudomonadota</taxon>
        <taxon>Gammaproteobacteria</taxon>
        <taxon>Oceanospirillales</taxon>
        <taxon>Oceanospirillaceae</taxon>
        <taxon>Marinomonas</taxon>
    </lineage>
</organism>
<sequence length="433" mass="45914">MSQIVDIKAREVLDSRGNPTVEADVILADGSVGSACAPSGASTGSREALELRDGDKSRYLGKGVLKAVAAVNGPIRDALIGKDALAQAEIDHIMIDLDGTENKSTFGANAILAVSLAVAKAAAISKKVPLYAHIADINGTPGVYSMPVPMMNIINGGEHADNNVDIQEFMIQPVGAPNFREALRYGAEIFHALKKVLSDRGLSTAVGDEGGFAPDLSSNAEALAVIKEAVAAAGYELGKDITLAMDCAASEFYDKEANIYDLKGEGKKFTSEEFNFFLQDLTKQYPIVSIEDGLDESDWDGFAHQTKLMGDKIQLVGDDLFVTNTKILQRGIDNGIANSILIKFNQIGSLTETLAAIKMAKDAGFTAVISHRSGETEDATIADLAVGTAAGQIKTGSLCRSDRVAKYNQLLRIEEQLGGKAPYKGRSEIKGQA</sequence>
<accession>A6VUU9</accession>
<keyword id="KW-0963">Cytoplasm</keyword>
<keyword id="KW-0324">Glycolysis</keyword>
<keyword id="KW-0456">Lyase</keyword>
<keyword id="KW-0460">Magnesium</keyword>
<keyword id="KW-0479">Metal-binding</keyword>
<keyword id="KW-0964">Secreted</keyword>
<dbReference type="EC" id="4.2.1.11" evidence="1"/>
<dbReference type="EMBL" id="CP000749">
    <property type="protein sequence ID" value="ABR70228.1"/>
    <property type="molecule type" value="Genomic_DNA"/>
</dbReference>
<dbReference type="SMR" id="A6VUU9"/>
<dbReference type="STRING" id="400668.Mmwyl1_1299"/>
<dbReference type="KEGG" id="mmw:Mmwyl1_1299"/>
<dbReference type="eggNOG" id="COG0148">
    <property type="taxonomic scope" value="Bacteria"/>
</dbReference>
<dbReference type="HOGENOM" id="CLU_031223_2_1_6"/>
<dbReference type="OrthoDB" id="9804716at2"/>
<dbReference type="UniPathway" id="UPA00109">
    <property type="reaction ID" value="UER00187"/>
</dbReference>
<dbReference type="GO" id="GO:0009986">
    <property type="term" value="C:cell surface"/>
    <property type="evidence" value="ECO:0007669"/>
    <property type="project" value="UniProtKB-SubCell"/>
</dbReference>
<dbReference type="GO" id="GO:0005576">
    <property type="term" value="C:extracellular region"/>
    <property type="evidence" value="ECO:0007669"/>
    <property type="project" value="UniProtKB-SubCell"/>
</dbReference>
<dbReference type="GO" id="GO:0000015">
    <property type="term" value="C:phosphopyruvate hydratase complex"/>
    <property type="evidence" value="ECO:0007669"/>
    <property type="project" value="InterPro"/>
</dbReference>
<dbReference type="GO" id="GO:0000287">
    <property type="term" value="F:magnesium ion binding"/>
    <property type="evidence" value="ECO:0007669"/>
    <property type="project" value="UniProtKB-UniRule"/>
</dbReference>
<dbReference type="GO" id="GO:0004634">
    <property type="term" value="F:phosphopyruvate hydratase activity"/>
    <property type="evidence" value="ECO:0007669"/>
    <property type="project" value="UniProtKB-UniRule"/>
</dbReference>
<dbReference type="GO" id="GO:0006096">
    <property type="term" value="P:glycolytic process"/>
    <property type="evidence" value="ECO:0007669"/>
    <property type="project" value="UniProtKB-UniRule"/>
</dbReference>
<dbReference type="CDD" id="cd03313">
    <property type="entry name" value="enolase"/>
    <property type="match status" value="1"/>
</dbReference>
<dbReference type="FunFam" id="3.20.20.120:FF:000001">
    <property type="entry name" value="Enolase"/>
    <property type="match status" value="1"/>
</dbReference>
<dbReference type="FunFam" id="3.30.390.10:FF:000001">
    <property type="entry name" value="Enolase"/>
    <property type="match status" value="1"/>
</dbReference>
<dbReference type="Gene3D" id="3.20.20.120">
    <property type="entry name" value="Enolase-like C-terminal domain"/>
    <property type="match status" value="1"/>
</dbReference>
<dbReference type="Gene3D" id="3.30.390.10">
    <property type="entry name" value="Enolase-like, N-terminal domain"/>
    <property type="match status" value="1"/>
</dbReference>
<dbReference type="HAMAP" id="MF_00318">
    <property type="entry name" value="Enolase"/>
    <property type="match status" value="1"/>
</dbReference>
<dbReference type="InterPro" id="IPR000941">
    <property type="entry name" value="Enolase"/>
</dbReference>
<dbReference type="InterPro" id="IPR036849">
    <property type="entry name" value="Enolase-like_C_sf"/>
</dbReference>
<dbReference type="InterPro" id="IPR029017">
    <property type="entry name" value="Enolase-like_N"/>
</dbReference>
<dbReference type="InterPro" id="IPR020810">
    <property type="entry name" value="Enolase_C"/>
</dbReference>
<dbReference type="InterPro" id="IPR020809">
    <property type="entry name" value="Enolase_CS"/>
</dbReference>
<dbReference type="InterPro" id="IPR020811">
    <property type="entry name" value="Enolase_N"/>
</dbReference>
<dbReference type="NCBIfam" id="TIGR01060">
    <property type="entry name" value="eno"/>
    <property type="match status" value="1"/>
</dbReference>
<dbReference type="PANTHER" id="PTHR11902">
    <property type="entry name" value="ENOLASE"/>
    <property type="match status" value="1"/>
</dbReference>
<dbReference type="PANTHER" id="PTHR11902:SF1">
    <property type="entry name" value="ENOLASE"/>
    <property type="match status" value="1"/>
</dbReference>
<dbReference type="Pfam" id="PF00113">
    <property type="entry name" value="Enolase_C"/>
    <property type="match status" value="1"/>
</dbReference>
<dbReference type="Pfam" id="PF03952">
    <property type="entry name" value="Enolase_N"/>
    <property type="match status" value="1"/>
</dbReference>
<dbReference type="PIRSF" id="PIRSF001400">
    <property type="entry name" value="Enolase"/>
    <property type="match status" value="1"/>
</dbReference>
<dbReference type="PRINTS" id="PR00148">
    <property type="entry name" value="ENOLASE"/>
</dbReference>
<dbReference type="SFLD" id="SFLDS00001">
    <property type="entry name" value="Enolase"/>
    <property type="match status" value="1"/>
</dbReference>
<dbReference type="SFLD" id="SFLDF00002">
    <property type="entry name" value="enolase"/>
    <property type="match status" value="1"/>
</dbReference>
<dbReference type="SMART" id="SM01192">
    <property type="entry name" value="Enolase_C"/>
    <property type="match status" value="1"/>
</dbReference>
<dbReference type="SMART" id="SM01193">
    <property type="entry name" value="Enolase_N"/>
    <property type="match status" value="1"/>
</dbReference>
<dbReference type="SUPFAM" id="SSF51604">
    <property type="entry name" value="Enolase C-terminal domain-like"/>
    <property type="match status" value="1"/>
</dbReference>
<dbReference type="SUPFAM" id="SSF54826">
    <property type="entry name" value="Enolase N-terminal domain-like"/>
    <property type="match status" value="1"/>
</dbReference>
<dbReference type="PROSITE" id="PS00164">
    <property type="entry name" value="ENOLASE"/>
    <property type="match status" value="1"/>
</dbReference>
<protein>
    <recommendedName>
        <fullName evidence="1">Enolase</fullName>
        <ecNumber evidence="1">4.2.1.11</ecNumber>
    </recommendedName>
    <alternativeName>
        <fullName evidence="1">2-phospho-D-glycerate hydro-lyase</fullName>
    </alternativeName>
    <alternativeName>
        <fullName evidence="1">2-phosphoglycerate dehydratase</fullName>
    </alternativeName>
</protein>
<name>ENO_MARMS</name>
<proteinExistence type="inferred from homology"/>
<feature type="chain" id="PRO_1000079140" description="Enolase">
    <location>
        <begin position="1"/>
        <end position="433"/>
    </location>
</feature>
<feature type="active site" description="Proton donor" evidence="1">
    <location>
        <position position="209"/>
    </location>
</feature>
<feature type="active site" description="Proton acceptor" evidence="1">
    <location>
        <position position="343"/>
    </location>
</feature>
<feature type="binding site" evidence="1">
    <location>
        <position position="167"/>
    </location>
    <ligand>
        <name>(2R)-2-phosphoglycerate</name>
        <dbReference type="ChEBI" id="CHEBI:58289"/>
    </ligand>
</feature>
<feature type="binding site" evidence="1">
    <location>
        <position position="246"/>
    </location>
    <ligand>
        <name>Mg(2+)</name>
        <dbReference type="ChEBI" id="CHEBI:18420"/>
    </ligand>
</feature>
<feature type="binding site" evidence="1">
    <location>
        <position position="291"/>
    </location>
    <ligand>
        <name>Mg(2+)</name>
        <dbReference type="ChEBI" id="CHEBI:18420"/>
    </ligand>
</feature>
<feature type="binding site" evidence="1">
    <location>
        <position position="318"/>
    </location>
    <ligand>
        <name>Mg(2+)</name>
        <dbReference type="ChEBI" id="CHEBI:18420"/>
    </ligand>
</feature>
<feature type="binding site" evidence="1">
    <location>
        <position position="343"/>
    </location>
    <ligand>
        <name>(2R)-2-phosphoglycerate</name>
        <dbReference type="ChEBI" id="CHEBI:58289"/>
    </ligand>
</feature>
<feature type="binding site" evidence="1">
    <location>
        <position position="372"/>
    </location>
    <ligand>
        <name>(2R)-2-phosphoglycerate</name>
        <dbReference type="ChEBI" id="CHEBI:58289"/>
    </ligand>
</feature>
<feature type="binding site" evidence="1">
    <location>
        <position position="373"/>
    </location>
    <ligand>
        <name>(2R)-2-phosphoglycerate</name>
        <dbReference type="ChEBI" id="CHEBI:58289"/>
    </ligand>
</feature>
<feature type="binding site" evidence="1">
    <location>
        <position position="394"/>
    </location>
    <ligand>
        <name>(2R)-2-phosphoglycerate</name>
        <dbReference type="ChEBI" id="CHEBI:58289"/>
    </ligand>
</feature>
<evidence type="ECO:0000255" key="1">
    <source>
        <dbReference type="HAMAP-Rule" id="MF_00318"/>
    </source>
</evidence>
<gene>
    <name evidence="1" type="primary">eno</name>
    <name type="ordered locus">Mmwyl1_1299</name>
</gene>
<reference key="1">
    <citation type="submission" date="2007-06" db="EMBL/GenBank/DDBJ databases">
        <title>Complete sequence of Marinomonas sp. MWYL1.</title>
        <authorList>
            <consortium name="US DOE Joint Genome Institute"/>
            <person name="Copeland A."/>
            <person name="Lucas S."/>
            <person name="Lapidus A."/>
            <person name="Barry K."/>
            <person name="Glavina del Rio T."/>
            <person name="Dalin E."/>
            <person name="Tice H."/>
            <person name="Pitluck S."/>
            <person name="Kiss H."/>
            <person name="Brettin T."/>
            <person name="Bruce D."/>
            <person name="Detter J.C."/>
            <person name="Han C."/>
            <person name="Schmutz J."/>
            <person name="Larimer F."/>
            <person name="Land M."/>
            <person name="Hauser L."/>
            <person name="Kyrpides N."/>
            <person name="Kim E."/>
            <person name="Johnston A.W.B."/>
            <person name="Todd J.D."/>
            <person name="Rogers R."/>
            <person name="Wexler M."/>
            <person name="Bond P.L."/>
            <person name="Li Y."/>
            <person name="Richardson P."/>
        </authorList>
    </citation>
    <scope>NUCLEOTIDE SEQUENCE [LARGE SCALE GENOMIC DNA]</scope>
    <source>
        <strain>MWYL1</strain>
    </source>
</reference>
<comment type="function">
    <text evidence="1">Catalyzes the reversible conversion of 2-phosphoglycerate (2-PG) into phosphoenolpyruvate (PEP). It is essential for the degradation of carbohydrates via glycolysis.</text>
</comment>
<comment type="catalytic activity">
    <reaction evidence="1">
        <text>(2R)-2-phosphoglycerate = phosphoenolpyruvate + H2O</text>
        <dbReference type="Rhea" id="RHEA:10164"/>
        <dbReference type="ChEBI" id="CHEBI:15377"/>
        <dbReference type="ChEBI" id="CHEBI:58289"/>
        <dbReference type="ChEBI" id="CHEBI:58702"/>
        <dbReference type="EC" id="4.2.1.11"/>
    </reaction>
</comment>
<comment type="cofactor">
    <cofactor evidence="1">
        <name>Mg(2+)</name>
        <dbReference type="ChEBI" id="CHEBI:18420"/>
    </cofactor>
    <text evidence="1">Binds a second Mg(2+) ion via substrate during catalysis.</text>
</comment>
<comment type="pathway">
    <text evidence="1">Carbohydrate degradation; glycolysis; pyruvate from D-glyceraldehyde 3-phosphate: step 4/5.</text>
</comment>
<comment type="subunit">
    <text evidence="1">Component of the RNA degradosome, a multiprotein complex involved in RNA processing and mRNA degradation.</text>
</comment>
<comment type="subcellular location">
    <subcellularLocation>
        <location evidence="1">Cytoplasm</location>
    </subcellularLocation>
    <subcellularLocation>
        <location evidence="1">Secreted</location>
    </subcellularLocation>
    <subcellularLocation>
        <location evidence="1">Cell surface</location>
    </subcellularLocation>
    <text evidence="1">Fractions of enolase are present in both the cytoplasm and on the cell surface.</text>
</comment>
<comment type="similarity">
    <text evidence="1">Belongs to the enolase family.</text>
</comment>